<protein>
    <recommendedName>
        <fullName>Protein TraJ</fullName>
    </recommendedName>
    <alternativeName>
        <fullName>Relaxosome protein</fullName>
    </alternativeName>
</protein>
<proteinExistence type="evidence at protein level"/>
<evidence type="ECO:0000250" key="1"/>
<evidence type="ECO:0000269" key="2">
    <source>
    </source>
</evidence>
<gene>
    <name type="primary">traJ</name>
</gene>
<geneLocation type="plasmid">
    <name>IncP-alpha RP4</name>
</geneLocation>
<accession>P17909</accession>
<organism>
    <name type="scientific">Escherichia coli</name>
    <dbReference type="NCBI Taxonomy" id="562"/>
    <lineage>
        <taxon>Bacteria</taxon>
        <taxon>Pseudomonadati</taxon>
        <taxon>Pseudomonadota</taxon>
        <taxon>Gammaproteobacteria</taxon>
        <taxon>Enterobacterales</taxon>
        <taxon>Enterobacteriaceae</taxon>
        <taxon>Escherichia</taxon>
    </lineage>
</organism>
<reference key="1">
    <citation type="journal article" date="1989" name="J. Biol. Chem.">
        <title>TraJ protein of plasmid RP4 binds to a 19-base pair invert sequence repetition within the transfer origin.</title>
        <authorList>
            <person name="Ziegelin G."/>
            <person name="Fuerste J.P."/>
            <person name="Lanka E."/>
        </authorList>
    </citation>
    <scope>NUCLEOTIDE SEQUENCE [GENOMIC DNA]</scope>
    <scope>PROTEIN SEQUENCE OF 2-6 AND 119-123</scope>
</reference>
<reference key="2">
    <citation type="journal article" date="1991" name="DNA Seq.">
        <title>Nucleotide sequence and organization of genes flanking the transfer origin of promiscuous plasmid RP4.</title>
        <authorList>
            <person name="Ziegelin G."/>
            <person name="Pansegrau W."/>
            <person name="Strack B."/>
            <person name="Balzer D."/>
            <person name="Kroeger M."/>
            <person name="Kruft V."/>
            <person name="Lanka E."/>
        </authorList>
    </citation>
    <scope>NUCLEOTIDE SEQUENCE [GENOMIC DNA]</scope>
    <source>
        <strain>ATCC 33694 / HB101</strain>
    </source>
</reference>
<reference key="3">
    <citation type="journal article" date="1989" name="Proc. Natl. Acad. Sci. U.S.A.">
        <title>Conjugative transfer of promiscuous IncP plasmids: interaction of plasmid-encoded products with the transfer origin.</title>
        <authorList>
            <person name="Fuerste J.P."/>
            <person name="Pansegrau W."/>
            <person name="Ziegelin G."/>
            <person name="Kroeger M."/>
            <person name="Lanka E."/>
        </authorList>
    </citation>
    <scope>NUCLEOTIDE SEQUENCE [GENOMIC DNA] OF 1-8</scope>
</reference>
<reference key="4">
    <citation type="journal article" date="1990" name="Proc. Natl. Acad. Sci. U.S.A.">
        <title>In vitro assembly of relaxosomes at the transfer origin of plasmid RP4.</title>
        <authorList>
            <person name="Pansegrau W."/>
            <person name="Balzer D."/>
            <person name="Kruft V."/>
            <person name="Lurz R."/>
            <person name="Lanka E."/>
        </authorList>
    </citation>
    <scope>PROTEIN SEQUENCE OF 115-123</scope>
</reference>
<keyword id="KW-0184">Conjugation</keyword>
<keyword id="KW-0963">Cytoplasm</keyword>
<keyword id="KW-0903">Direct protein sequencing</keyword>
<keyword id="KW-0238">DNA-binding</keyword>
<keyword id="KW-0614">Plasmid</keyword>
<comment type="function">
    <text>Transfer of plasmid RP4 during bacterial conjugation requires the plasmid-encoded TraJ protein, which binds to a 19-base pair invert sequence repetition within the transfer origin. TraJ protein is bound to only one side of the DNA helix. This nucleoprotein structure is the initial complex in the pathway to assemble a functional relaxosome.</text>
</comment>
<comment type="subunit">
    <text>Monomer.</text>
</comment>
<comment type="subcellular location">
    <subcellularLocation>
        <location evidence="1">Cytoplasm</location>
    </subcellularLocation>
</comment>
<feature type="initiator methionine" description="Removed" evidence="2">
    <location>
        <position position="1"/>
    </location>
</feature>
<feature type="chain" id="PRO_0000068461" description="Protein TraJ">
    <location>
        <begin position="2"/>
        <end position="123"/>
    </location>
</feature>
<sequence>MADETKPTRKGSPPIKVYCLPDERRAIEEKAAAAGMSLSAYLLAVGQGYKITGVVDYEHVRELARINGDLGRLGGLLKLWLTDDPRTARFGDATILALLAKIEEKQDELGKVMMGVVRPRAEP</sequence>
<dbReference type="EMBL" id="J04942">
    <property type="protein sequence ID" value="AAA91588.1"/>
    <property type="molecule type" value="Genomic_DNA"/>
</dbReference>
<dbReference type="EMBL" id="X54459">
    <property type="protein sequence ID" value="CAA38338.1"/>
    <property type="molecule type" value="Genomic_DNA"/>
</dbReference>
<dbReference type="EMBL" id="M25423">
    <property type="protein sequence ID" value="AAA26421.2"/>
    <property type="molecule type" value="Genomic_DNA"/>
</dbReference>
<dbReference type="PIR" id="A34172">
    <property type="entry name" value="A34172"/>
</dbReference>
<dbReference type="RefSeq" id="WP_008832110.1">
    <property type="nucleotide sequence ID" value="NZ_VMTS01000048.1"/>
</dbReference>
<dbReference type="GO" id="GO:0005737">
    <property type="term" value="C:cytoplasm"/>
    <property type="evidence" value="ECO:0007669"/>
    <property type="project" value="UniProtKB-SubCell"/>
</dbReference>
<dbReference type="GO" id="GO:0003677">
    <property type="term" value="F:DNA binding"/>
    <property type="evidence" value="ECO:0007669"/>
    <property type="project" value="UniProtKB-KW"/>
</dbReference>
<dbReference type="InterPro" id="IPR053842">
    <property type="entry name" value="NikA-like"/>
</dbReference>
<dbReference type="NCBIfam" id="NF010451">
    <property type="entry name" value="PRK13877.1"/>
    <property type="match status" value="1"/>
</dbReference>
<dbReference type="Pfam" id="PF21983">
    <property type="entry name" value="NikA-like"/>
    <property type="match status" value="1"/>
</dbReference>
<name>TRAJ6_ECOLX</name>